<sequence length="346" mass="38653">MNPITLIIIYFTILMGPVITMSSSNLLLMWVGLEMSLLAIIPLLANKKSPRSTEAATKYFLTQATASMIILLVIILNYKQSGMWTLQQQTNNMLLNMMLISLAMKLGLAPFHYWLPEVTQGIPLHIGLILLTWQKIAPLSILYQFYQLLNPTITTILAISSVFVGAWGGLNQTQTRKIMAYSSIAHMGWMTAILPYNPNLTLLNLTIYILLTVPMFITLMTNSATTINTLSLAWNKTPMILTMTSIILLSLGGLPPLTGFLPKWAIISELLKNNCSTLSTLMAIMALLSLFFYTRLIYSMSLTMFPTNNNSKMISHHHQNPKHNFILPTLTVLSTLTLPLSSQLIT</sequence>
<name>NU2M_RAT</name>
<protein>
    <recommendedName>
        <fullName evidence="4">NADH-ubiquinone oxidoreductase chain 2</fullName>
        <ecNumber evidence="1">7.1.1.2</ecNumber>
    </recommendedName>
    <alternativeName>
        <fullName>NADH dehydrogenase subunit 2</fullName>
    </alternativeName>
</protein>
<comment type="function">
    <text evidence="1">Core subunit of the mitochondrial membrane respiratory chain NADH dehydrogenase (Complex I) which catalyzes electron transfer from NADH through the respiratory chain, using ubiquinone as an electron acceptor. Essential for the catalytic activity and assembly of complex I.</text>
</comment>
<comment type="catalytic activity">
    <reaction evidence="1">
        <text>a ubiquinone + NADH + 5 H(+)(in) = a ubiquinol + NAD(+) + 4 H(+)(out)</text>
        <dbReference type="Rhea" id="RHEA:29091"/>
        <dbReference type="Rhea" id="RHEA-COMP:9565"/>
        <dbReference type="Rhea" id="RHEA-COMP:9566"/>
        <dbReference type="ChEBI" id="CHEBI:15378"/>
        <dbReference type="ChEBI" id="CHEBI:16389"/>
        <dbReference type="ChEBI" id="CHEBI:17976"/>
        <dbReference type="ChEBI" id="CHEBI:57540"/>
        <dbReference type="ChEBI" id="CHEBI:57945"/>
        <dbReference type="EC" id="7.1.1.2"/>
    </reaction>
</comment>
<comment type="subunit">
    <text evidence="1 2">Core subunit of respiratory chain NADH dehydrogenase (Complex I) which is composed of 45 different subunits. Interacts with TMEM242 (By similarity).</text>
</comment>
<comment type="subcellular location">
    <subcellularLocation>
        <location evidence="2">Mitochondrion inner membrane</location>
        <topology evidence="3">Multi-pass membrane protein</topology>
    </subcellularLocation>
</comment>
<comment type="similarity">
    <text evidence="4">Belongs to the complex I subunit 2 family.</text>
</comment>
<feature type="chain" id="PRO_0000117633" description="NADH-ubiquinone oxidoreductase chain 2">
    <location>
        <begin position="1"/>
        <end position="346"/>
    </location>
</feature>
<feature type="transmembrane region" description="Helical" evidence="3">
    <location>
        <begin position="25"/>
        <end position="45"/>
    </location>
</feature>
<feature type="transmembrane region" description="Helical" evidence="3">
    <location>
        <begin position="56"/>
        <end position="76"/>
    </location>
</feature>
<feature type="transmembrane region" description="Helical" evidence="3">
    <location>
        <begin position="94"/>
        <end position="114"/>
    </location>
</feature>
<feature type="transmembrane region" description="Helical" evidence="3">
    <location>
        <begin position="122"/>
        <end position="142"/>
    </location>
</feature>
<feature type="transmembrane region" description="Helical" evidence="3">
    <location>
        <begin position="148"/>
        <end position="168"/>
    </location>
</feature>
<feature type="transmembrane region" description="Helical" evidence="3">
    <location>
        <begin position="178"/>
        <end position="198"/>
    </location>
</feature>
<feature type="transmembrane region" description="Helical" evidence="3">
    <location>
        <begin position="200"/>
        <end position="220"/>
    </location>
</feature>
<feature type="transmembrane region" description="Helical" evidence="3">
    <location>
        <begin position="240"/>
        <end position="260"/>
    </location>
</feature>
<feature type="transmembrane region" description="Helical" evidence="3">
    <location>
        <begin position="278"/>
        <end position="298"/>
    </location>
</feature>
<feature type="transmembrane region" description="Helical" evidence="3">
    <location>
        <begin position="325"/>
        <end position="345"/>
    </location>
</feature>
<feature type="sequence conflict" description="In Ref. 1; CAA32955." evidence="4" ref="1">
    <original>IIIYFTILMGPVITMSSSNLLL</original>
    <variation>TIIYLTTFKGRLITTLSTNLPP</variation>
    <location>
        <begin position="7"/>
        <end position="28"/>
    </location>
</feature>
<feature type="sequence conflict" description="In Ref. 1; CAA32955." evidence="4" ref="1">
    <original>ITL</original>
    <variation>NYI</variation>
    <location>
        <begin position="217"/>
        <end position="219"/>
    </location>
</feature>
<feature type="sequence conflict" description="In Ref. 1; CAA32955." evidence="4" ref="1">
    <original>T</original>
    <variation>A</variation>
    <location>
        <position position="244"/>
    </location>
</feature>
<feature type="sequence conflict" description="In Ref. 1; CAA32955." evidence="4" ref="1">
    <original>M</original>
    <variation>T</variation>
    <location>
        <position position="304"/>
    </location>
</feature>
<feature type="sequence conflict" description="In Ref. 1; CAA32955." evidence="4" ref="1">
    <location>
        <position position="316"/>
    </location>
</feature>
<dbReference type="EC" id="7.1.1.2" evidence="1"/>
<dbReference type="EMBL" id="X14848">
    <property type="protein sequence ID" value="CAA32955.1"/>
    <property type="molecule type" value="Genomic_DNA"/>
</dbReference>
<dbReference type="EMBL" id="AY172581">
    <property type="protein sequence ID" value="AAN77595.1"/>
    <property type="molecule type" value="Genomic_DNA"/>
</dbReference>
<dbReference type="EMBL" id="V00676">
    <property type="protein sequence ID" value="CAA24047.1"/>
    <property type="molecule type" value="Genomic_DNA"/>
</dbReference>
<dbReference type="EMBL" id="V00677">
    <property type="protein sequence ID" value="CAA24049.1"/>
    <property type="molecule type" value="Genomic_DNA"/>
</dbReference>
<dbReference type="EMBL" id="V00678">
    <property type="protein sequence ID" value="CAA24051.1"/>
    <property type="molecule type" value="Genomic_DNA"/>
</dbReference>
<dbReference type="EMBL" id="V00679">
    <property type="protein sequence ID" value="CAA24053.1"/>
    <property type="molecule type" value="Genomic_DNA"/>
</dbReference>
<dbReference type="PIR" id="S04748">
    <property type="entry name" value="S04748"/>
</dbReference>
<dbReference type="RefSeq" id="AP_004893.1">
    <property type="nucleotide sequence ID" value="AC_000022.2"/>
</dbReference>
<dbReference type="RefSeq" id="YP_665630.1">
    <property type="nucleotide sequence ID" value="NC_001665.2"/>
</dbReference>
<dbReference type="SMR" id="P11662"/>
<dbReference type="FunCoup" id="P11662">
    <property type="interactions" value="38"/>
</dbReference>
<dbReference type="STRING" id="10116.ENSRNOP00000043885"/>
<dbReference type="PhosphoSitePlus" id="P11662"/>
<dbReference type="PaxDb" id="10116-ENSRNOP00000043885"/>
<dbReference type="Ensembl" id="ENSRNOT00000040993.4">
    <property type="protein sequence ID" value="ENSRNOP00000043885.3"/>
    <property type="gene ID" value="ENSRNOG00000031033.4"/>
</dbReference>
<dbReference type="GeneID" id="26194"/>
<dbReference type="KEGG" id="rno:26194"/>
<dbReference type="AGR" id="RGD:620556"/>
<dbReference type="CTD" id="4536"/>
<dbReference type="RGD" id="620556">
    <property type="gene designation" value="Mt-nd2"/>
</dbReference>
<dbReference type="eggNOG" id="KOG4668">
    <property type="taxonomic scope" value="Eukaryota"/>
</dbReference>
<dbReference type="GeneTree" id="ENSGT00730000111348"/>
<dbReference type="HOGENOM" id="CLU_007100_1_3_1"/>
<dbReference type="InParanoid" id="P11662"/>
<dbReference type="OMA" id="HFWVPEV"/>
<dbReference type="OrthoDB" id="79465at9989"/>
<dbReference type="PhylomeDB" id="P11662"/>
<dbReference type="Reactome" id="R-RNO-611105">
    <property type="pathway name" value="Respiratory electron transport"/>
</dbReference>
<dbReference type="Reactome" id="R-RNO-6799198">
    <property type="pathway name" value="Complex I biogenesis"/>
</dbReference>
<dbReference type="PRO" id="PR:P11662"/>
<dbReference type="Proteomes" id="UP000002494">
    <property type="component" value="Mitochondrion"/>
</dbReference>
<dbReference type="Bgee" id="ENSRNOG00000031033">
    <property type="expression patterns" value="Expressed in ovary and 19 other cell types or tissues"/>
</dbReference>
<dbReference type="ExpressionAtlas" id="P11662">
    <property type="expression patterns" value="baseline and differential"/>
</dbReference>
<dbReference type="GO" id="GO:0005743">
    <property type="term" value="C:mitochondrial inner membrane"/>
    <property type="evidence" value="ECO:0000250"/>
    <property type="project" value="UniProtKB"/>
</dbReference>
<dbReference type="GO" id="GO:0045271">
    <property type="term" value="C:respiratory chain complex I"/>
    <property type="evidence" value="ECO:0000266"/>
    <property type="project" value="RGD"/>
</dbReference>
<dbReference type="GO" id="GO:0035255">
    <property type="term" value="F:ionotropic glutamate receptor binding"/>
    <property type="evidence" value="ECO:0000353"/>
    <property type="project" value="RGD"/>
</dbReference>
<dbReference type="GO" id="GO:0008137">
    <property type="term" value="F:NADH dehydrogenase (ubiquinone) activity"/>
    <property type="evidence" value="ECO:0000250"/>
    <property type="project" value="UniProtKB"/>
</dbReference>
<dbReference type="GO" id="GO:0019901">
    <property type="term" value="F:protein kinase binding"/>
    <property type="evidence" value="ECO:0000353"/>
    <property type="project" value="RGD"/>
</dbReference>
<dbReference type="GO" id="GO:0006120">
    <property type="term" value="P:mitochondrial electron transport, NADH to ubiquinone"/>
    <property type="evidence" value="ECO:0000250"/>
    <property type="project" value="UniProtKB"/>
</dbReference>
<dbReference type="GO" id="GO:0032981">
    <property type="term" value="P:mitochondrial respiratory chain complex I assembly"/>
    <property type="evidence" value="ECO:0000250"/>
    <property type="project" value="UniProtKB"/>
</dbReference>
<dbReference type="GO" id="GO:0072593">
    <property type="term" value="P:reactive oxygen species metabolic process"/>
    <property type="evidence" value="ECO:0000266"/>
    <property type="project" value="RGD"/>
</dbReference>
<dbReference type="GO" id="GO:0001666">
    <property type="term" value="P:response to hypoxia"/>
    <property type="evidence" value="ECO:0000270"/>
    <property type="project" value="RGD"/>
</dbReference>
<dbReference type="InterPro" id="IPR050175">
    <property type="entry name" value="Complex_I_Subunit_2"/>
</dbReference>
<dbReference type="InterPro" id="IPR010933">
    <property type="entry name" value="NADH_DH_su2_C"/>
</dbReference>
<dbReference type="InterPro" id="IPR003917">
    <property type="entry name" value="NADH_UbQ_OxRdtase_chain2"/>
</dbReference>
<dbReference type="InterPro" id="IPR001750">
    <property type="entry name" value="ND/Mrp_TM"/>
</dbReference>
<dbReference type="PANTHER" id="PTHR46552">
    <property type="entry name" value="NADH-UBIQUINONE OXIDOREDUCTASE CHAIN 2"/>
    <property type="match status" value="1"/>
</dbReference>
<dbReference type="PANTHER" id="PTHR46552:SF1">
    <property type="entry name" value="NADH-UBIQUINONE OXIDOREDUCTASE CHAIN 2"/>
    <property type="match status" value="1"/>
</dbReference>
<dbReference type="Pfam" id="PF06444">
    <property type="entry name" value="NADH_dehy_S2_C"/>
    <property type="match status" value="1"/>
</dbReference>
<dbReference type="Pfam" id="PF00361">
    <property type="entry name" value="Proton_antipo_M"/>
    <property type="match status" value="1"/>
</dbReference>
<dbReference type="PRINTS" id="PR01436">
    <property type="entry name" value="NADHDHGNASE2"/>
</dbReference>
<gene>
    <name evidence="5" type="primary">Mt-nd2</name>
    <name type="synonym">Nd2</name>
</gene>
<geneLocation type="mitochondrion"/>
<keyword id="KW-0249">Electron transport</keyword>
<keyword id="KW-0472">Membrane</keyword>
<keyword id="KW-0496">Mitochondrion</keyword>
<keyword id="KW-0999">Mitochondrion inner membrane</keyword>
<keyword id="KW-0520">NAD</keyword>
<keyword id="KW-1185">Reference proteome</keyword>
<keyword id="KW-0679">Respiratory chain</keyword>
<keyword id="KW-1278">Translocase</keyword>
<keyword id="KW-0812">Transmembrane</keyword>
<keyword id="KW-1133">Transmembrane helix</keyword>
<keyword id="KW-0813">Transport</keyword>
<keyword id="KW-0830">Ubiquinone</keyword>
<reference key="1">
    <citation type="journal article" date="1989" name="J. Mol. Evol.">
        <title>The complete nucleotide sequence of the Rattus norvegicus mitochondrial genome: cryptic signals revealed by comparative analysis between vertebrates.</title>
        <authorList>
            <person name="Gadaleta G."/>
            <person name="Pepe G."/>
            <person name="de Candia G."/>
            <person name="Quagliariello C."/>
            <person name="Sbisa E."/>
            <person name="Saccone C."/>
        </authorList>
    </citation>
    <scope>NUCLEOTIDE SEQUENCE [GENOMIC DNA]</scope>
    <source>
        <strain>Wistar</strain>
    </source>
</reference>
<reference key="2">
    <citation type="submission" date="1995-01" db="EMBL/GenBank/DDBJ databases">
        <authorList>
            <person name="Saccone C."/>
        </authorList>
    </citation>
    <scope>SEQUENCE REVISION</scope>
</reference>
<reference key="3">
    <citation type="journal article" date="2004" name="Nature">
        <title>Genome sequence of the Brown Norway rat yields insights into mammalian evolution.</title>
        <authorList>
            <person name="Gibbs R.A."/>
            <person name="Weinstock G.M."/>
            <person name="Metzker M.L."/>
            <person name="Muzny D.M."/>
            <person name="Sodergren E.J."/>
            <person name="Scherer S."/>
            <person name="Scott G."/>
            <person name="Steffen D."/>
            <person name="Worley K.C."/>
            <person name="Burch P.E."/>
            <person name="Okwuonu G."/>
            <person name="Hines S."/>
            <person name="Lewis L."/>
            <person name="Deramo C."/>
            <person name="Delgado O."/>
            <person name="Dugan-Rocha S."/>
            <person name="Miner G."/>
            <person name="Morgan M."/>
            <person name="Hawes A."/>
            <person name="Gill R."/>
            <person name="Holt R.A."/>
            <person name="Adams M.D."/>
            <person name="Amanatides P.G."/>
            <person name="Baden-Tillson H."/>
            <person name="Barnstead M."/>
            <person name="Chin S."/>
            <person name="Evans C.A."/>
            <person name="Ferriera S."/>
            <person name="Fosler C."/>
            <person name="Glodek A."/>
            <person name="Gu Z."/>
            <person name="Jennings D."/>
            <person name="Kraft C.L."/>
            <person name="Nguyen T."/>
            <person name="Pfannkoch C.M."/>
            <person name="Sitter C."/>
            <person name="Sutton G.G."/>
            <person name="Venter J.C."/>
            <person name="Woodage T."/>
            <person name="Smith D."/>
            <person name="Lee H.-M."/>
            <person name="Gustafson E."/>
            <person name="Cahill P."/>
            <person name="Kana A."/>
            <person name="Doucette-Stamm L."/>
            <person name="Weinstock K."/>
            <person name="Fechtel K."/>
            <person name="Weiss R.B."/>
            <person name="Dunn D.M."/>
            <person name="Green E.D."/>
            <person name="Blakesley R.W."/>
            <person name="Bouffard G.G."/>
            <person name="De Jong P.J."/>
            <person name="Osoegawa K."/>
            <person name="Zhu B."/>
            <person name="Marra M."/>
            <person name="Schein J."/>
            <person name="Bosdet I."/>
            <person name="Fjell C."/>
            <person name="Jones S."/>
            <person name="Krzywinski M."/>
            <person name="Mathewson C."/>
            <person name="Siddiqui A."/>
            <person name="Wye N."/>
            <person name="McPherson J."/>
            <person name="Zhao S."/>
            <person name="Fraser C.M."/>
            <person name="Shetty J."/>
            <person name="Shatsman S."/>
            <person name="Geer K."/>
            <person name="Chen Y."/>
            <person name="Abramzon S."/>
            <person name="Nierman W.C."/>
            <person name="Havlak P.H."/>
            <person name="Chen R."/>
            <person name="Durbin K.J."/>
            <person name="Egan A."/>
            <person name="Ren Y."/>
            <person name="Song X.-Z."/>
            <person name="Li B."/>
            <person name="Liu Y."/>
            <person name="Qin X."/>
            <person name="Cawley S."/>
            <person name="Cooney A.J."/>
            <person name="D'Souza L.M."/>
            <person name="Martin K."/>
            <person name="Wu J.Q."/>
            <person name="Gonzalez-Garay M.L."/>
            <person name="Jackson A.R."/>
            <person name="Kalafus K.J."/>
            <person name="McLeod M.P."/>
            <person name="Milosavljevic A."/>
            <person name="Virk D."/>
            <person name="Volkov A."/>
            <person name="Wheeler D.A."/>
            <person name="Zhang Z."/>
            <person name="Bailey J.A."/>
            <person name="Eichler E.E."/>
            <person name="Tuzun E."/>
            <person name="Birney E."/>
            <person name="Mongin E."/>
            <person name="Ureta-Vidal A."/>
            <person name="Woodwark C."/>
            <person name="Zdobnov E."/>
            <person name="Bork P."/>
            <person name="Suyama M."/>
            <person name="Torrents D."/>
            <person name="Alexandersson M."/>
            <person name="Trask B.J."/>
            <person name="Young J.M."/>
            <person name="Huang H."/>
            <person name="Wang H."/>
            <person name="Xing H."/>
            <person name="Daniels S."/>
            <person name="Gietzen D."/>
            <person name="Schmidt J."/>
            <person name="Stevens K."/>
            <person name="Vitt U."/>
            <person name="Wingrove J."/>
            <person name="Camara F."/>
            <person name="Mar Alba M."/>
            <person name="Abril J.F."/>
            <person name="Guigo R."/>
            <person name="Smit A."/>
            <person name="Dubchak I."/>
            <person name="Rubin E.M."/>
            <person name="Couronne O."/>
            <person name="Poliakov A."/>
            <person name="Huebner N."/>
            <person name="Ganten D."/>
            <person name="Goesele C."/>
            <person name="Hummel O."/>
            <person name="Kreitler T."/>
            <person name="Lee Y.-A."/>
            <person name="Monti J."/>
            <person name="Schulz H."/>
            <person name="Zimdahl H."/>
            <person name="Himmelbauer H."/>
            <person name="Lehrach H."/>
            <person name="Jacob H.J."/>
            <person name="Bromberg S."/>
            <person name="Gullings-Handley J."/>
            <person name="Jensen-Seaman M.I."/>
            <person name="Kwitek A.E."/>
            <person name="Lazar J."/>
            <person name="Pasko D."/>
            <person name="Tonellato P.J."/>
            <person name="Twigger S."/>
            <person name="Ponting C.P."/>
            <person name="Duarte J.M."/>
            <person name="Rice S."/>
            <person name="Goodstadt L."/>
            <person name="Beatson S.A."/>
            <person name="Emes R.D."/>
            <person name="Winter E.E."/>
            <person name="Webber C."/>
            <person name="Brandt P."/>
            <person name="Nyakatura G."/>
            <person name="Adetobi M."/>
            <person name="Chiaromonte F."/>
            <person name="Elnitski L."/>
            <person name="Eswara P."/>
            <person name="Hardison R.C."/>
            <person name="Hou M."/>
            <person name="Kolbe D."/>
            <person name="Makova K."/>
            <person name="Miller W."/>
            <person name="Nekrutenko A."/>
            <person name="Riemer C."/>
            <person name="Schwartz S."/>
            <person name="Taylor J."/>
            <person name="Yang S."/>
            <person name="Zhang Y."/>
            <person name="Lindpaintner K."/>
            <person name="Andrews T.D."/>
            <person name="Caccamo M."/>
            <person name="Clamp M."/>
            <person name="Clarke L."/>
            <person name="Curwen V."/>
            <person name="Durbin R.M."/>
            <person name="Eyras E."/>
            <person name="Searle S.M."/>
            <person name="Cooper G.M."/>
            <person name="Batzoglou S."/>
            <person name="Brudno M."/>
            <person name="Sidow A."/>
            <person name="Stone E.A."/>
            <person name="Payseur B.A."/>
            <person name="Bourque G."/>
            <person name="Lopez-Otin C."/>
            <person name="Puente X.S."/>
            <person name="Chakrabarti K."/>
            <person name="Chatterji S."/>
            <person name="Dewey C."/>
            <person name="Pachter L."/>
            <person name="Bray N."/>
            <person name="Yap V.B."/>
            <person name="Caspi A."/>
            <person name="Tesler G."/>
            <person name="Pevzner P.A."/>
            <person name="Haussler D."/>
            <person name="Roskin K.M."/>
            <person name="Baertsch R."/>
            <person name="Clawson H."/>
            <person name="Furey T.S."/>
            <person name="Hinrichs A.S."/>
            <person name="Karolchik D."/>
            <person name="Kent W.J."/>
            <person name="Rosenbloom K.R."/>
            <person name="Trumbower H."/>
            <person name="Weirauch M."/>
            <person name="Cooper D.N."/>
            <person name="Stenson P.D."/>
            <person name="Ma B."/>
            <person name="Brent M."/>
            <person name="Arumugam M."/>
            <person name="Shteynberg D."/>
            <person name="Copley R.R."/>
            <person name="Taylor M.S."/>
            <person name="Riethman H."/>
            <person name="Mudunuri U."/>
            <person name="Peterson J."/>
            <person name="Guyer M."/>
            <person name="Felsenfeld A."/>
            <person name="Old S."/>
            <person name="Mockrin S."/>
            <person name="Collins F.S."/>
        </authorList>
    </citation>
    <scope>NUCLEOTIDE SEQUENCE [LARGE SCALE GENOMIC DNA]</scope>
    <source>
        <strain>Brown Norway</strain>
    </source>
</reference>
<reference key="4">
    <citation type="journal article" date="1983" name="Nucleic Acids Res.">
        <title>Tumor-associated mutations of rat mitochondrial transfer RNA genes.</title>
        <authorList>
            <person name="Taira M."/>
            <person name="Yoshida E."/>
            <person name="Kobayashi M."/>
            <person name="Yaginuma K."/>
            <person name="Koike K."/>
        </authorList>
    </citation>
    <scope>NUCLEOTIDE SEQUENCE [GENOMIC DNA] OF 321-346</scope>
    <source>
        <strain>Donryu</strain>
        <tissue>Liver</tissue>
    </source>
</reference>
<accession>P11662</accession>
<organism>
    <name type="scientific">Rattus norvegicus</name>
    <name type="common">Rat</name>
    <dbReference type="NCBI Taxonomy" id="10116"/>
    <lineage>
        <taxon>Eukaryota</taxon>
        <taxon>Metazoa</taxon>
        <taxon>Chordata</taxon>
        <taxon>Craniata</taxon>
        <taxon>Vertebrata</taxon>
        <taxon>Euteleostomi</taxon>
        <taxon>Mammalia</taxon>
        <taxon>Eutheria</taxon>
        <taxon>Euarchontoglires</taxon>
        <taxon>Glires</taxon>
        <taxon>Rodentia</taxon>
        <taxon>Myomorpha</taxon>
        <taxon>Muroidea</taxon>
        <taxon>Muridae</taxon>
        <taxon>Murinae</taxon>
        <taxon>Rattus</taxon>
    </lineage>
</organism>
<proteinExistence type="inferred from homology"/>
<evidence type="ECO:0000250" key="1">
    <source>
        <dbReference type="UniProtKB" id="P03891"/>
    </source>
</evidence>
<evidence type="ECO:0000250" key="2">
    <source>
        <dbReference type="UniProtKB" id="P03892"/>
    </source>
</evidence>
<evidence type="ECO:0000255" key="3"/>
<evidence type="ECO:0000305" key="4"/>
<evidence type="ECO:0000312" key="5">
    <source>
        <dbReference type="RGD" id="620556"/>
    </source>
</evidence>